<reference key="1">
    <citation type="journal article" date="2013" name="Nature">
        <title>The zebrafish reference genome sequence and its relationship to the human genome.</title>
        <authorList>
            <person name="Howe K."/>
            <person name="Clark M.D."/>
            <person name="Torroja C.F."/>
            <person name="Torrance J."/>
            <person name="Berthelot C."/>
            <person name="Muffato M."/>
            <person name="Collins J.E."/>
            <person name="Humphray S."/>
            <person name="McLaren K."/>
            <person name="Matthews L."/>
            <person name="McLaren S."/>
            <person name="Sealy I."/>
            <person name="Caccamo M."/>
            <person name="Churcher C."/>
            <person name="Scott C."/>
            <person name="Barrett J.C."/>
            <person name="Koch R."/>
            <person name="Rauch G.J."/>
            <person name="White S."/>
            <person name="Chow W."/>
            <person name="Kilian B."/>
            <person name="Quintais L.T."/>
            <person name="Guerra-Assuncao J.A."/>
            <person name="Zhou Y."/>
            <person name="Gu Y."/>
            <person name="Yen J."/>
            <person name="Vogel J.H."/>
            <person name="Eyre T."/>
            <person name="Redmond S."/>
            <person name="Banerjee R."/>
            <person name="Chi J."/>
            <person name="Fu B."/>
            <person name="Langley E."/>
            <person name="Maguire S.F."/>
            <person name="Laird G.K."/>
            <person name="Lloyd D."/>
            <person name="Kenyon E."/>
            <person name="Donaldson S."/>
            <person name="Sehra H."/>
            <person name="Almeida-King J."/>
            <person name="Loveland J."/>
            <person name="Trevanion S."/>
            <person name="Jones M."/>
            <person name="Quail M."/>
            <person name="Willey D."/>
            <person name="Hunt A."/>
            <person name="Burton J."/>
            <person name="Sims S."/>
            <person name="McLay K."/>
            <person name="Plumb B."/>
            <person name="Davis J."/>
            <person name="Clee C."/>
            <person name="Oliver K."/>
            <person name="Clark R."/>
            <person name="Riddle C."/>
            <person name="Elliot D."/>
            <person name="Threadgold G."/>
            <person name="Harden G."/>
            <person name="Ware D."/>
            <person name="Begum S."/>
            <person name="Mortimore B."/>
            <person name="Kerry G."/>
            <person name="Heath P."/>
            <person name="Phillimore B."/>
            <person name="Tracey A."/>
            <person name="Corby N."/>
            <person name="Dunn M."/>
            <person name="Johnson C."/>
            <person name="Wood J."/>
            <person name="Clark S."/>
            <person name="Pelan S."/>
            <person name="Griffiths G."/>
            <person name="Smith M."/>
            <person name="Glithero R."/>
            <person name="Howden P."/>
            <person name="Barker N."/>
            <person name="Lloyd C."/>
            <person name="Stevens C."/>
            <person name="Harley J."/>
            <person name="Holt K."/>
            <person name="Panagiotidis G."/>
            <person name="Lovell J."/>
            <person name="Beasley H."/>
            <person name="Henderson C."/>
            <person name="Gordon D."/>
            <person name="Auger K."/>
            <person name="Wright D."/>
            <person name="Collins J."/>
            <person name="Raisen C."/>
            <person name="Dyer L."/>
            <person name="Leung K."/>
            <person name="Robertson L."/>
            <person name="Ambridge K."/>
            <person name="Leongamornlert D."/>
            <person name="McGuire S."/>
            <person name="Gilderthorp R."/>
            <person name="Griffiths C."/>
            <person name="Manthravadi D."/>
            <person name="Nichol S."/>
            <person name="Barker G."/>
            <person name="Whitehead S."/>
            <person name="Kay M."/>
            <person name="Brown J."/>
            <person name="Murnane C."/>
            <person name="Gray E."/>
            <person name="Humphries M."/>
            <person name="Sycamore N."/>
            <person name="Barker D."/>
            <person name="Saunders D."/>
            <person name="Wallis J."/>
            <person name="Babbage A."/>
            <person name="Hammond S."/>
            <person name="Mashreghi-Mohammadi M."/>
            <person name="Barr L."/>
            <person name="Martin S."/>
            <person name="Wray P."/>
            <person name="Ellington A."/>
            <person name="Matthews N."/>
            <person name="Ellwood M."/>
            <person name="Woodmansey R."/>
            <person name="Clark G."/>
            <person name="Cooper J."/>
            <person name="Tromans A."/>
            <person name="Grafham D."/>
            <person name="Skuce C."/>
            <person name="Pandian R."/>
            <person name="Andrews R."/>
            <person name="Harrison E."/>
            <person name="Kimberley A."/>
            <person name="Garnett J."/>
            <person name="Fosker N."/>
            <person name="Hall R."/>
            <person name="Garner P."/>
            <person name="Kelly D."/>
            <person name="Bird C."/>
            <person name="Palmer S."/>
            <person name="Gehring I."/>
            <person name="Berger A."/>
            <person name="Dooley C.M."/>
            <person name="Ersan-Urun Z."/>
            <person name="Eser C."/>
            <person name="Geiger H."/>
            <person name="Geisler M."/>
            <person name="Karotki L."/>
            <person name="Kirn A."/>
            <person name="Konantz J."/>
            <person name="Konantz M."/>
            <person name="Oberlander M."/>
            <person name="Rudolph-Geiger S."/>
            <person name="Teucke M."/>
            <person name="Lanz C."/>
            <person name="Raddatz G."/>
            <person name="Osoegawa K."/>
            <person name="Zhu B."/>
            <person name="Rapp A."/>
            <person name="Widaa S."/>
            <person name="Langford C."/>
            <person name="Yang F."/>
            <person name="Schuster S.C."/>
            <person name="Carter N.P."/>
            <person name="Harrow J."/>
            <person name="Ning Z."/>
            <person name="Herrero J."/>
            <person name="Searle S.M."/>
            <person name="Enright A."/>
            <person name="Geisler R."/>
            <person name="Plasterk R.H."/>
            <person name="Lee C."/>
            <person name="Westerfield M."/>
            <person name="de Jong P.J."/>
            <person name="Zon L.I."/>
            <person name="Postlethwait J.H."/>
            <person name="Nusslein-Volhard C."/>
            <person name="Hubbard T.J."/>
            <person name="Roest Crollius H."/>
            <person name="Rogers J."/>
            <person name="Stemple D.L."/>
        </authorList>
    </citation>
    <scope>NUCLEOTIDE SEQUENCE [LARGE SCALE GENOMIC DNA]</scope>
    <source>
        <strain>Tuebingen</strain>
    </source>
</reference>
<reference key="2">
    <citation type="submission" date="2003-07" db="EMBL/GenBank/DDBJ databases">
        <authorList>
            <consortium name="NIH - Zebrafish Gene Collection (ZGC) project"/>
        </authorList>
    </citation>
    <scope>NUCLEOTIDE SEQUENCE [LARGE SCALE MRNA]</scope>
    <source>
        <strain>SJD</strain>
    </source>
</reference>
<reference key="3">
    <citation type="journal article" date="2004" name="Proc. Natl. Acad. Sci. U.S.A.">
        <title>Hematopoietic gene expression profile in zebrafish kidney marrow.</title>
        <authorList>
            <person name="Song H.-D."/>
            <person name="Sun X.-J."/>
            <person name="Deng M."/>
            <person name="Zhang G.-W."/>
            <person name="Zhou Y."/>
            <person name="Wu X.-Y."/>
            <person name="Sheng Y."/>
            <person name="Chen Y."/>
            <person name="Ruan Z."/>
            <person name="Jiang C.-L."/>
            <person name="Fan H.-Y."/>
            <person name="Zon L.I."/>
            <person name="Kanki J.P."/>
            <person name="Liu T.X."/>
            <person name="Look A.T."/>
            <person name="Chen Z."/>
        </authorList>
    </citation>
    <scope>NUCLEOTIDE SEQUENCE [LARGE SCALE MRNA] OF 38-831</scope>
    <source>
        <tissue>Kidney marrow</tissue>
    </source>
</reference>
<sequence>MNTDVEFHIRQNYPWNKLPANVKQSLGNSQREYDKQVLLYSIRNQLRFRNNLVRHVKKDERKYYEELLKYSREHLMLYPYHLSDIMVKGLRVTPFSYYISIMEDIMNCEKSYDSLPNFTAADCLRLLGIGRNQYIDLMNQCRSSKKFFRRKSARDLLPAKPVEITVEPWWVVQTGYITEDDIRICSVAEKAAIDKMIDSGPQLAGSMEYNVVLSLYNRGYIYLDVPISDDSCISVPPLEGFVMNRVQGDYFETLLYKIFVSIDEQTNVSELANVLEIDLGLVKNAVSMYCRLGFAIKKGQVISPDQLHPSWKSAPSVNRLKGTMDPQKMLLSWEGGSPVMEAGSSATDTDTTSLEDQDTASVSSLSIPAAPTKRIAFLFDSTLTAFLMMGNLSPNLKSHAVTMFEVGKLSDETLDSFLMELEKVESTAEGEAQRYFDHALTLRNTILFLRYNKDLTPDQGPDVPNIGLPLDLLRCESLLGLDPATCSRVLNKNYKLLVSMAPLSNEIRPISSCTPQHIGPAIPEVSSIWFKLYLYSVTGQGPPSLLLSKGSRLRKLPDIFQAYDRLLITSWGHDPGVVPSSNVLTMLNDALTHSAVLIQGHGMHGHGETVHVPFPFDEEDLKGEFSYSNMCAHKALKILRDKVDLEHQCGYITMLNHNNRHRRRASDADGDAELCGVLDANGSNESFELVTEENNGDGGKKQGTEASSSEDEWVPLELCFGMPLFSSELNRKVCQRIVSHKLCSKDSLQELLHSSRKLALKVLSFVQSFQDGKQPADPDSGVSGPLSQPPAESGVPLPAINLLFKDGELKEWSGRAPPSLHISAPQRDQPT</sequence>
<keyword id="KW-0968">Cytoplasmic vesicle</keyword>
<keyword id="KW-0333">Golgi apparatus</keyword>
<keyword id="KW-1185">Reference proteome</keyword>
<name>F91A1_DANRE</name>
<gene>
    <name type="primary">fam91a1</name>
    <name type="ORF">si:dkey-5e12.2</name>
    <name type="ORF">zgc:63609</name>
</gene>
<organism>
    <name type="scientific">Danio rerio</name>
    <name type="common">Zebrafish</name>
    <name type="synonym">Brachydanio rerio</name>
    <dbReference type="NCBI Taxonomy" id="7955"/>
    <lineage>
        <taxon>Eukaryota</taxon>
        <taxon>Metazoa</taxon>
        <taxon>Chordata</taxon>
        <taxon>Craniata</taxon>
        <taxon>Vertebrata</taxon>
        <taxon>Euteleostomi</taxon>
        <taxon>Actinopterygii</taxon>
        <taxon>Neopterygii</taxon>
        <taxon>Teleostei</taxon>
        <taxon>Ostariophysi</taxon>
        <taxon>Cypriniformes</taxon>
        <taxon>Danionidae</taxon>
        <taxon>Danioninae</taxon>
        <taxon>Danio</taxon>
    </lineage>
</organism>
<evidence type="ECO:0000250" key="1">
    <source>
        <dbReference type="UniProtKB" id="Q658Y4"/>
    </source>
</evidence>
<evidence type="ECO:0000256" key="2">
    <source>
        <dbReference type="SAM" id="MobiDB-lite"/>
    </source>
</evidence>
<evidence type="ECO:0000305" key="3"/>
<feature type="chain" id="PRO_0000282554" description="Protein FAM91A1">
    <location>
        <begin position="1"/>
        <end position="831"/>
    </location>
</feature>
<feature type="region of interest" description="Disordered" evidence="2">
    <location>
        <begin position="341"/>
        <end position="362"/>
    </location>
</feature>
<feature type="region of interest" description="Disordered" evidence="2">
    <location>
        <begin position="690"/>
        <end position="709"/>
    </location>
</feature>
<feature type="region of interest" description="Disordered" evidence="2">
    <location>
        <begin position="770"/>
        <end position="794"/>
    </location>
</feature>
<dbReference type="EMBL" id="BX004966">
    <property type="protein sequence ID" value="CAK11119.1"/>
    <property type="molecule type" value="Genomic_DNA"/>
</dbReference>
<dbReference type="EMBL" id="BC054922">
    <property type="protein sequence ID" value="AAH54922.1"/>
    <property type="molecule type" value="mRNA"/>
</dbReference>
<dbReference type="EMBL" id="AY423008">
    <property type="protein sequence ID" value="AAQ97984.1"/>
    <property type="status" value="ALT_INIT"/>
    <property type="molecule type" value="mRNA"/>
</dbReference>
<dbReference type="RefSeq" id="NP_956735.1">
    <property type="nucleotide sequence ID" value="NM_200441.1"/>
</dbReference>
<dbReference type="SMR" id="Q6TEP1"/>
<dbReference type="FunCoup" id="Q6TEP1">
    <property type="interactions" value="2537"/>
</dbReference>
<dbReference type="STRING" id="7955.ENSDARP00000008437"/>
<dbReference type="PaxDb" id="7955-ENSDARP00000008437"/>
<dbReference type="Ensembl" id="ENSDART00000019459">
    <property type="protein sequence ID" value="ENSDARP00000008437"/>
    <property type="gene ID" value="ENSDARG00000003320"/>
</dbReference>
<dbReference type="GeneID" id="393413"/>
<dbReference type="KEGG" id="dre:393413"/>
<dbReference type="AGR" id="ZFIN:ZDB-GENE-040426-1187"/>
<dbReference type="CTD" id="157769"/>
<dbReference type="ZFIN" id="ZDB-GENE-040426-1187">
    <property type="gene designation" value="fam91a1"/>
</dbReference>
<dbReference type="eggNOG" id="KOG3707">
    <property type="taxonomic scope" value="Eukaryota"/>
</dbReference>
<dbReference type="HOGENOM" id="CLU_010656_0_0_1"/>
<dbReference type="InParanoid" id="Q6TEP1"/>
<dbReference type="OMA" id="HYESFPF"/>
<dbReference type="OrthoDB" id="275996at2759"/>
<dbReference type="PhylomeDB" id="Q6TEP1"/>
<dbReference type="TreeFam" id="TF314641"/>
<dbReference type="PRO" id="PR:Q6TEP1"/>
<dbReference type="Proteomes" id="UP000000437">
    <property type="component" value="Alternate scaffold 19"/>
</dbReference>
<dbReference type="Proteomes" id="UP000000437">
    <property type="component" value="Chromosome 19"/>
</dbReference>
<dbReference type="Bgee" id="ENSDARG00000003320">
    <property type="expression patterns" value="Expressed in brain and 19 other cell types or tissues"/>
</dbReference>
<dbReference type="ExpressionAtlas" id="Q6TEP1">
    <property type="expression patterns" value="baseline and differential"/>
</dbReference>
<dbReference type="GO" id="GO:0031410">
    <property type="term" value="C:cytoplasmic vesicle"/>
    <property type="evidence" value="ECO:0000250"/>
    <property type="project" value="UniProtKB"/>
</dbReference>
<dbReference type="GO" id="GO:0005802">
    <property type="term" value="C:trans-Golgi network"/>
    <property type="evidence" value="ECO:0000250"/>
    <property type="project" value="UniProtKB"/>
</dbReference>
<dbReference type="GO" id="GO:0006886">
    <property type="term" value="P:intracellular protein transport"/>
    <property type="evidence" value="ECO:0000250"/>
    <property type="project" value="UniProtKB"/>
</dbReference>
<dbReference type="GO" id="GO:0099041">
    <property type="term" value="P:vesicle tethering to Golgi"/>
    <property type="evidence" value="ECO:0000318"/>
    <property type="project" value="GO_Central"/>
</dbReference>
<dbReference type="InterPro" id="IPR039199">
    <property type="entry name" value="FAM91"/>
</dbReference>
<dbReference type="InterPro" id="IPR028097">
    <property type="entry name" value="FAM91_C_dom"/>
</dbReference>
<dbReference type="InterPro" id="IPR028091">
    <property type="entry name" value="FAM91_N_dom"/>
</dbReference>
<dbReference type="PANTHER" id="PTHR28441">
    <property type="entry name" value="PROTEIN FAM91A1"/>
    <property type="match status" value="1"/>
</dbReference>
<dbReference type="PANTHER" id="PTHR28441:SF2">
    <property type="entry name" value="PROTEIN FAM91A1"/>
    <property type="match status" value="1"/>
</dbReference>
<dbReference type="Pfam" id="PF14648">
    <property type="entry name" value="FAM91_C"/>
    <property type="match status" value="1"/>
</dbReference>
<dbReference type="Pfam" id="PF14647">
    <property type="entry name" value="FAM91_N"/>
    <property type="match status" value="1"/>
</dbReference>
<comment type="function">
    <text evidence="1">As component of the WDR11 complex may act together with TBC1D23 to facilitate the golgin-mediated capture of vesicles generated using AP-1.</text>
</comment>
<comment type="subunit">
    <text evidence="1">May be a component of the WDR1 complex (By similarity). May interact with golgins.</text>
</comment>
<comment type="subcellular location">
    <subcellularLocation>
        <location evidence="1">Golgi apparatus</location>
        <location evidence="1">trans-Golgi network</location>
    </subcellularLocation>
    <subcellularLocation>
        <location evidence="1">Cytoplasmic vesicle</location>
    </subcellularLocation>
</comment>
<comment type="similarity">
    <text evidence="3">Belongs to the FAM91 family.</text>
</comment>
<comment type="sequence caution" evidence="3">
    <conflict type="erroneous initiation">
        <sequence resource="EMBL-CDS" id="AAQ97984"/>
    </conflict>
    <text>Truncated N-terminus.</text>
</comment>
<proteinExistence type="evidence at transcript level"/>
<accession>Q6TEP1</accession>
<accession>Q7SYC3</accession>
<protein>
    <recommendedName>
        <fullName>Protein FAM91A1</fullName>
    </recommendedName>
</protein>